<gene>
    <name evidence="1" type="primary">rpsU2</name>
    <name type="ordered locus">bsr7117</name>
</gene>
<evidence type="ECO:0000255" key="1">
    <source>
        <dbReference type="HAMAP-Rule" id="MF_00358"/>
    </source>
</evidence>
<evidence type="ECO:0000256" key="2">
    <source>
        <dbReference type="SAM" id="MobiDB-lite"/>
    </source>
</evidence>
<evidence type="ECO:0000305" key="3"/>
<feature type="chain" id="PRO_0000266633" description="Small ribosomal subunit protein bS21B">
    <location>
        <begin position="1"/>
        <end position="98"/>
    </location>
</feature>
<feature type="region of interest" description="Disordered" evidence="2">
    <location>
        <begin position="61"/>
        <end position="98"/>
    </location>
</feature>
<feature type="compositionally biased region" description="Gly residues" evidence="2">
    <location>
        <begin position="78"/>
        <end position="98"/>
    </location>
</feature>
<comment type="similarity">
    <text evidence="1">Belongs to the bacterial ribosomal protein bS21 family.</text>
</comment>
<keyword id="KW-1185">Reference proteome</keyword>
<keyword id="KW-0687">Ribonucleoprotein</keyword>
<keyword id="KW-0689">Ribosomal protein</keyword>
<accession>Q89EG8</accession>
<protein>
    <recommendedName>
        <fullName evidence="1">Small ribosomal subunit protein bS21B</fullName>
    </recommendedName>
    <alternativeName>
        <fullName evidence="3">30S ribosomal protein S21 2</fullName>
    </alternativeName>
</protein>
<reference key="1">
    <citation type="journal article" date="2002" name="DNA Res.">
        <title>Complete genomic sequence of nitrogen-fixing symbiotic bacterium Bradyrhizobium japonicum USDA110.</title>
        <authorList>
            <person name="Kaneko T."/>
            <person name="Nakamura Y."/>
            <person name="Sato S."/>
            <person name="Minamisawa K."/>
            <person name="Uchiumi T."/>
            <person name="Sasamoto S."/>
            <person name="Watanabe A."/>
            <person name="Idesawa K."/>
            <person name="Iriguchi M."/>
            <person name="Kawashima K."/>
            <person name="Kohara M."/>
            <person name="Matsumoto M."/>
            <person name="Shimpo S."/>
            <person name="Tsuruoka H."/>
            <person name="Wada T."/>
            <person name="Yamada M."/>
            <person name="Tabata S."/>
        </authorList>
    </citation>
    <scope>NUCLEOTIDE SEQUENCE [LARGE SCALE GENOMIC DNA]</scope>
    <source>
        <strain>JCM 10833 / BCRC 13528 / IAM 13628 / NBRC 14792 / USDA 110</strain>
    </source>
</reference>
<name>RS212_BRADU</name>
<sequence length="98" mass="10913">MQVLVRDNNVDQALKALKKKMQREGIFREMKLRGHYEKPSEKKAREKAEAVRRARKLARKKLQREGLLPMKPKPVFGAGAGGERGGRGGPGAGPRGPR</sequence>
<proteinExistence type="inferred from homology"/>
<dbReference type="EMBL" id="BA000040">
    <property type="protein sequence ID" value="BAC52382.1"/>
    <property type="molecule type" value="Genomic_DNA"/>
</dbReference>
<dbReference type="RefSeq" id="NP_773757.1">
    <property type="nucleotide sequence ID" value="NC_004463.1"/>
</dbReference>
<dbReference type="RefSeq" id="WP_011089854.1">
    <property type="nucleotide sequence ID" value="NC_004463.1"/>
</dbReference>
<dbReference type="SMR" id="Q89EG8"/>
<dbReference type="FunCoup" id="Q89EG8">
    <property type="interactions" value="607"/>
</dbReference>
<dbReference type="STRING" id="224911.AAV28_33225"/>
<dbReference type="EnsemblBacteria" id="BAC52382">
    <property type="protein sequence ID" value="BAC52382"/>
    <property type="gene ID" value="BAC52382"/>
</dbReference>
<dbReference type="GeneID" id="46494081"/>
<dbReference type="KEGG" id="bja:bsr7117"/>
<dbReference type="PATRIC" id="fig|224911.44.peg.7176"/>
<dbReference type="eggNOG" id="COG0828">
    <property type="taxonomic scope" value="Bacteria"/>
</dbReference>
<dbReference type="HOGENOM" id="CLU_159258_0_1_5"/>
<dbReference type="InParanoid" id="Q89EG8"/>
<dbReference type="OrthoDB" id="9811907at2"/>
<dbReference type="PhylomeDB" id="Q89EG8"/>
<dbReference type="Proteomes" id="UP000002526">
    <property type="component" value="Chromosome"/>
</dbReference>
<dbReference type="GO" id="GO:1990904">
    <property type="term" value="C:ribonucleoprotein complex"/>
    <property type="evidence" value="ECO:0007669"/>
    <property type="project" value="UniProtKB-KW"/>
</dbReference>
<dbReference type="GO" id="GO:0005840">
    <property type="term" value="C:ribosome"/>
    <property type="evidence" value="ECO:0007669"/>
    <property type="project" value="UniProtKB-KW"/>
</dbReference>
<dbReference type="GO" id="GO:0003735">
    <property type="term" value="F:structural constituent of ribosome"/>
    <property type="evidence" value="ECO:0007669"/>
    <property type="project" value="InterPro"/>
</dbReference>
<dbReference type="GO" id="GO:0006412">
    <property type="term" value="P:translation"/>
    <property type="evidence" value="ECO:0007669"/>
    <property type="project" value="UniProtKB-UniRule"/>
</dbReference>
<dbReference type="Gene3D" id="1.20.5.1150">
    <property type="entry name" value="Ribosomal protein S8"/>
    <property type="match status" value="1"/>
</dbReference>
<dbReference type="HAMAP" id="MF_00358">
    <property type="entry name" value="Ribosomal_bS21"/>
    <property type="match status" value="1"/>
</dbReference>
<dbReference type="InterPro" id="IPR001911">
    <property type="entry name" value="Ribosomal_bS21"/>
</dbReference>
<dbReference type="InterPro" id="IPR018278">
    <property type="entry name" value="Ribosomal_bS21_CS"/>
</dbReference>
<dbReference type="InterPro" id="IPR038380">
    <property type="entry name" value="Ribosomal_bS21_sf"/>
</dbReference>
<dbReference type="NCBIfam" id="TIGR00030">
    <property type="entry name" value="S21p"/>
    <property type="match status" value="1"/>
</dbReference>
<dbReference type="PANTHER" id="PTHR21109">
    <property type="entry name" value="MITOCHONDRIAL 28S RIBOSOMAL PROTEIN S21"/>
    <property type="match status" value="1"/>
</dbReference>
<dbReference type="PANTHER" id="PTHR21109:SF0">
    <property type="entry name" value="SMALL RIBOSOMAL SUBUNIT PROTEIN BS21M"/>
    <property type="match status" value="1"/>
</dbReference>
<dbReference type="Pfam" id="PF01165">
    <property type="entry name" value="Ribosomal_S21"/>
    <property type="match status" value="1"/>
</dbReference>
<dbReference type="PROSITE" id="PS01181">
    <property type="entry name" value="RIBOSOMAL_S21"/>
    <property type="match status" value="1"/>
</dbReference>
<organism>
    <name type="scientific">Bradyrhizobium diazoefficiens (strain JCM 10833 / BCRC 13528 / IAM 13628 / NBRC 14792 / USDA 110)</name>
    <dbReference type="NCBI Taxonomy" id="224911"/>
    <lineage>
        <taxon>Bacteria</taxon>
        <taxon>Pseudomonadati</taxon>
        <taxon>Pseudomonadota</taxon>
        <taxon>Alphaproteobacteria</taxon>
        <taxon>Hyphomicrobiales</taxon>
        <taxon>Nitrobacteraceae</taxon>
        <taxon>Bradyrhizobium</taxon>
    </lineage>
</organism>